<dbReference type="EC" id="1.1.1.105" evidence="3"/>
<dbReference type="EC" id="1.1.1.209" evidence="3"/>
<dbReference type="EC" id="1.1.1.239" evidence="3"/>
<dbReference type="EC" id="1.1.1.53" evidence="3"/>
<dbReference type="EC" id="1.1.1.62" evidence="3"/>
<dbReference type="EMBL" id="BC102626">
    <property type="protein sequence ID" value="AAI02627.1"/>
    <property type="molecule type" value="mRNA"/>
</dbReference>
<dbReference type="RefSeq" id="NP_001030472.1">
    <property type="nucleotide sequence ID" value="NM_001035395.2"/>
</dbReference>
<dbReference type="SMR" id="Q3T001"/>
<dbReference type="FunCoup" id="Q3T001">
    <property type="interactions" value="183"/>
</dbReference>
<dbReference type="STRING" id="9913.ENSBTAP00000015564"/>
<dbReference type="GlyCosmos" id="Q3T001">
    <property type="glycosylation" value="2 sites, No reported glycans"/>
</dbReference>
<dbReference type="GlyGen" id="Q3T001">
    <property type="glycosylation" value="2 sites"/>
</dbReference>
<dbReference type="PaxDb" id="9913-ENSBTAP00000015564"/>
<dbReference type="PeptideAtlas" id="Q3T001"/>
<dbReference type="GeneID" id="533086"/>
<dbReference type="KEGG" id="bta:533086"/>
<dbReference type="CTD" id="8630"/>
<dbReference type="eggNOG" id="KOG1610">
    <property type="taxonomic scope" value="Eukaryota"/>
</dbReference>
<dbReference type="InParanoid" id="Q3T001"/>
<dbReference type="OrthoDB" id="5296at2759"/>
<dbReference type="Proteomes" id="UP000009136">
    <property type="component" value="Unplaced"/>
</dbReference>
<dbReference type="GO" id="GO:0005789">
    <property type="term" value="C:endoplasmic reticulum membrane"/>
    <property type="evidence" value="ECO:0007669"/>
    <property type="project" value="UniProtKB-SubCell"/>
</dbReference>
<dbReference type="GO" id="GO:0043231">
    <property type="term" value="C:intracellular membrane-bounded organelle"/>
    <property type="evidence" value="ECO:0000318"/>
    <property type="project" value="GO_Central"/>
</dbReference>
<dbReference type="GO" id="GO:0047024">
    <property type="term" value="F:5-alpha-androstane-3-beta,17-beta-diol dehydrogenase (NADP+) activity"/>
    <property type="evidence" value="ECO:0000250"/>
    <property type="project" value="UniProtKB"/>
</dbReference>
<dbReference type="GO" id="GO:0004745">
    <property type="term" value="F:all-trans-retinol dehydrogenase (NAD+) activity"/>
    <property type="evidence" value="ECO:0000318"/>
    <property type="project" value="GO_Central"/>
</dbReference>
<dbReference type="GO" id="GO:0047044">
    <property type="term" value="F:androstan-3-alpha,17-beta-diol dehydrogenase (NAD+) activity"/>
    <property type="evidence" value="ECO:0000250"/>
    <property type="project" value="UniProtKB"/>
</dbReference>
<dbReference type="GO" id="GO:0047023">
    <property type="term" value="F:androsterone dehydrogenase [NAD(P)+] activity"/>
    <property type="evidence" value="ECO:0000250"/>
    <property type="project" value="UniProtKB"/>
</dbReference>
<dbReference type="GO" id="GO:0004303">
    <property type="term" value="F:estradiol 17-beta-dehydrogenase [NAD(P)+] activity"/>
    <property type="evidence" value="ECO:0000250"/>
    <property type="project" value="UniProtKB"/>
</dbReference>
<dbReference type="GO" id="GO:0047045">
    <property type="term" value="F:testosterone 17-beta-dehydrogenase (NADP+) activity"/>
    <property type="evidence" value="ECO:0000250"/>
    <property type="project" value="UniProtKB"/>
</dbReference>
<dbReference type="GO" id="GO:0047035">
    <property type="term" value="F:testosterone dehydrogenase (NAD+) activity"/>
    <property type="evidence" value="ECO:0000250"/>
    <property type="project" value="UniProtKB"/>
</dbReference>
<dbReference type="GO" id="GO:0062175">
    <property type="term" value="P:brexanolone catabolic process"/>
    <property type="evidence" value="ECO:0000250"/>
    <property type="project" value="UniProtKB"/>
</dbReference>
<dbReference type="GO" id="GO:0042572">
    <property type="term" value="P:retinol metabolic process"/>
    <property type="evidence" value="ECO:0000318"/>
    <property type="project" value="GO_Central"/>
</dbReference>
<dbReference type="GO" id="GO:0008202">
    <property type="term" value="P:steroid metabolic process"/>
    <property type="evidence" value="ECO:0000318"/>
    <property type="project" value="GO_Central"/>
</dbReference>
<dbReference type="CDD" id="cd09805">
    <property type="entry name" value="type2_17beta_HSD-like_SDR_c"/>
    <property type="match status" value="1"/>
</dbReference>
<dbReference type="FunFam" id="3.40.50.720:FF:000074">
    <property type="entry name" value="Retinol dehydrogenase type 1"/>
    <property type="match status" value="1"/>
</dbReference>
<dbReference type="Gene3D" id="3.40.50.720">
    <property type="entry name" value="NAD(P)-binding Rossmann-like Domain"/>
    <property type="match status" value="1"/>
</dbReference>
<dbReference type="InterPro" id="IPR036291">
    <property type="entry name" value="NAD(P)-bd_dom_sf"/>
</dbReference>
<dbReference type="InterPro" id="IPR020904">
    <property type="entry name" value="Sc_DH/Rdtase_CS"/>
</dbReference>
<dbReference type="InterPro" id="IPR002347">
    <property type="entry name" value="SDR_fam"/>
</dbReference>
<dbReference type="PANTHER" id="PTHR43313:SF4">
    <property type="entry name" value="17-BETA-HYDROXYSTEROID DEHYDROGENASE TYPE 6"/>
    <property type="match status" value="1"/>
</dbReference>
<dbReference type="PANTHER" id="PTHR43313">
    <property type="entry name" value="SHORT-CHAIN DEHYDROGENASE/REDUCTASE FAMILY 9C"/>
    <property type="match status" value="1"/>
</dbReference>
<dbReference type="Pfam" id="PF00106">
    <property type="entry name" value="adh_short"/>
    <property type="match status" value="1"/>
</dbReference>
<dbReference type="PRINTS" id="PR00081">
    <property type="entry name" value="GDHRDH"/>
</dbReference>
<dbReference type="PRINTS" id="PR00080">
    <property type="entry name" value="SDRFAMILY"/>
</dbReference>
<dbReference type="SUPFAM" id="SSF51735">
    <property type="entry name" value="NAD(P)-binding Rossmann-fold domains"/>
    <property type="match status" value="1"/>
</dbReference>
<dbReference type="PROSITE" id="PS00061">
    <property type="entry name" value="ADH_SHORT"/>
    <property type="match status" value="1"/>
</dbReference>
<keyword id="KW-0256">Endoplasmic reticulum</keyword>
<keyword id="KW-0325">Glycoprotein</keyword>
<keyword id="KW-0443">Lipid metabolism</keyword>
<keyword id="KW-0472">Membrane</keyword>
<keyword id="KW-0492">Microsome</keyword>
<keyword id="KW-0520">NAD</keyword>
<keyword id="KW-0560">Oxidoreductase</keyword>
<keyword id="KW-1185">Reference proteome</keyword>
<keyword id="KW-0732">Signal</keyword>
<keyword id="KW-0753">Steroid metabolism</keyword>
<name>H17B6_BOVIN</name>
<sequence length="317" mass="36198">MWLYLAVLLGLYYLLRWFRERQVVSHLQDKFVFITGCDSGFGNQLARQLDLRGLRVLAGCLTEQGAEQLRNQTSDRLQTVILDVTKTESIAAATEWVKECVGDRGLWGLVNNAGIFHSHGYAEWIKIETYRDTLRVNLIGVIEVTLSMLPLVRKAQGRIVNVSSILGRIAFFGAVYSCSKYGVEAFSDILRRELQHFGVKVSMVEPGYFRTAMTDWQKFSEIMKQIWKETPAHIKETYGQKFFDAYHDLMKQGLLSCSTNLNLVTDCMEHALTSVHPRTRYSAGWDAQFFFVPLSYLPTSLADYILTRSWPKPAQAV</sequence>
<reference key="1">
    <citation type="submission" date="2005-08" db="EMBL/GenBank/DDBJ databases">
        <authorList>
            <consortium name="NIH - Mammalian Gene Collection (MGC) project"/>
        </authorList>
    </citation>
    <scope>NUCLEOTIDE SEQUENCE [LARGE SCALE MRNA]</scope>
    <source>
        <strain>Hereford</strain>
        <tissue>Testis</tissue>
    </source>
</reference>
<gene>
    <name type="primary">HSD17B6</name>
</gene>
<evidence type="ECO:0000250" key="1"/>
<evidence type="ECO:0000250" key="2">
    <source>
        <dbReference type="UniProtKB" id="O14756"/>
    </source>
</evidence>
<evidence type="ECO:0000250" key="3">
    <source>
        <dbReference type="UniProtKB" id="Q9R092"/>
    </source>
</evidence>
<evidence type="ECO:0000255" key="4"/>
<evidence type="ECO:0000255" key="5">
    <source>
        <dbReference type="PROSITE-ProRule" id="PRU10001"/>
    </source>
</evidence>
<evidence type="ECO:0000305" key="6"/>
<protein>
    <recommendedName>
        <fullName>17-beta-hydroxysteroid dehydrogenase type 6</fullName>
        <shortName>17-beta-HSD 6</shortName>
        <shortName>17-beta-HSD6</shortName>
        <ecNumber evidence="3">1.1.1.105</ecNumber>
        <ecNumber evidence="3">1.1.1.209</ecNumber>
        <ecNumber evidence="3">1.1.1.239</ecNumber>
        <ecNumber evidence="3">1.1.1.53</ecNumber>
        <ecNumber evidence="3">1.1.1.62</ecNumber>
    </recommendedName>
    <alternativeName>
        <fullName>3-alpha-&gt;beta-hydroxysteroid epimerase</fullName>
        <shortName>3-alpha-&gt;beta-HSE</shortName>
    </alternativeName>
    <alternativeName>
        <fullName>Oxidative 3-alpha hydroxysteroid dehydrogenase</fullName>
    </alternativeName>
</protein>
<proteinExistence type="evidence at transcript level"/>
<comment type="function">
    <text evidence="3">NAD-dependent oxidoreductase with broad substrate specificity that shows both oxidative and reductive activity (in vitro). Has 17-beta-hydroxysteroid dehydrogenase activity towards various steroids (in vitro). Converts 5-alpha-androstan-3-alpha,17-beta-diol to androsterone and estradiol to estrone (in vitro). Has 3-alpha-hydroxysteroid dehydrogenase activity towards androsterone (in vitro). Has retinol dehydrogenase activity towards all-trans-retinol (in vitro). Can convert androsterone to epi-androsterone. Androsterone is first oxidized to 5-alpha-androstane-3,17-dione and then reduced to epi-andosterone. Can act on both C-19 and C-21 3-alpha-hydroxysteroids (By similarity).</text>
</comment>
<comment type="catalytic activity">
    <reaction evidence="3">
        <text>all-trans-retinol--[retinol-binding protein] + NAD(+) = all-trans-retinal--[retinol-binding protein] + NADH + H(+)</text>
        <dbReference type="Rhea" id="RHEA:48488"/>
        <dbReference type="Rhea" id="RHEA-COMP:14428"/>
        <dbReference type="Rhea" id="RHEA-COMP:14430"/>
        <dbReference type="ChEBI" id="CHEBI:15378"/>
        <dbReference type="ChEBI" id="CHEBI:17336"/>
        <dbReference type="ChEBI" id="CHEBI:17898"/>
        <dbReference type="ChEBI" id="CHEBI:57540"/>
        <dbReference type="ChEBI" id="CHEBI:57945"/>
        <dbReference type="ChEBI" id="CHEBI:83228"/>
        <dbReference type="EC" id="1.1.1.105"/>
    </reaction>
</comment>
<comment type="catalytic activity">
    <reaction evidence="3">
        <text>all-trans-retinol + NAD(+) = all-trans-retinal + NADH + H(+)</text>
        <dbReference type="Rhea" id="RHEA:21284"/>
        <dbReference type="ChEBI" id="CHEBI:15378"/>
        <dbReference type="ChEBI" id="CHEBI:17336"/>
        <dbReference type="ChEBI" id="CHEBI:17898"/>
        <dbReference type="ChEBI" id="CHEBI:57540"/>
        <dbReference type="ChEBI" id="CHEBI:57945"/>
        <dbReference type="EC" id="1.1.1.105"/>
    </reaction>
    <physiologicalReaction direction="left-to-right" evidence="3">
        <dbReference type="Rhea" id="RHEA:21285"/>
    </physiologicalReaction>
</comment>
<comment type="catalytic activity">
    <reaction evidence="3">
        <text>androsterone + NAD(+) = 5alpha-androstan-3,17-dione + NADH + H(+)</text>
        <dbReference type="Rhea" id="RHEA:20381"/>
        <dbReference type="ChEBI" id="CHEBI:15378"/>
        <dbReference type="ChEBI" id="CHEBI:15994"/>
        <dbReference type="ChEBI" id="CHEBI:16032"/>
        <dbReference type="ChEBI" id="CHEBI:57540"/>
        <dbReference type="ChEBI" id="CHEBI:57945"/>
        <dbReference type="EC" id="1.1.1.209"/>
    </reaction>
    <physiologicalReaction direction="left-to-right" evidence="3">
        <dbReference type="Rhea" id="RHEA:20382"/>
    </physiologicalReaction>
    <physiologicalReaction direction="right-to-left" evidence="3">
        <dbReference type="Rhea" id="RHEA:20383"/>
    </physiologicalReaction>
</comment>
<comment type="catalytic activity">
    <reaction evidence="3">
        <text>testosterone + NAD(+) = androst-4-ene-3,17-dione + NADH + H(+)</text>
        <dbReference type="Rhea" id="RHEA:14929"/>
        <dbReference type="ChEBI" id="CHEBI:15378"/>
        <dbReference type="ChEBI" id="CHEBI:16422"/>
        <dbReference type="ChEBI" id="CHEBI:17347"/>
        <dbReference type="ChEBI" id="CHEBI:57540"/>
        <dbReference type="ChEBI" id="CHEBI:57945"/>
        <dbReference type="EC" id="1.1.1.239"/>
    </reaction>
</comment>
<comment type="catalytic activity">
    <reaction evidence="3">
        <text>5alpha-androstane-3alpha,17beta-diol + NAD(+) = 17beta-hydroxy-5alpha-androstan-3-one + NADH + H(+)</text>
        <dbReference type="Rhea" id="RHEA:42004"/>
        <dbReference type="ChEBI" id="CHEBI:15378"/>
        <dbReference type="ChEBI" id="CHEBI:16330"/>
        <dbReference type="ChEBI" id="CHEBI:36713"/>
        <dbReference type="ChEBI" id="CHEBI:57540"/>
        <dbReference type="ChEBI" id="CHEBI:57945"/>
        <dbReference type="EC" id="1.1.1.53"/>
    </reaction>
    <physiologicalReaction direction="right-to-left" evidence="3">
        <dbReference type="Rhea" id="RHEA:42006"/>
    </physiologicalReaction>
</comment>
<comment type="catalytic activity">
    <reaction evidence="3">
        <text>17beta-estradiol + NAD(+) = estrone + NADH + H(+)</text>
        <dbReference type="Rhea" id="RHEA:24612"/>
        <dbReference type="ChEBI" id="CHEBI:15378"/>
        <dbReference type="ChEBI" id="CHEBI:16469"/>
        <dbReference type="ChEBI" id="CHEBI:17263"/>
        <dbReference type="ChEBI" id="CHEBI:57540"/>
        <dbReference type="ChEBI" id="CHEBI:57945"/>
        <dbReference type="EC" id="1.1.1.62"/>
    </reaction>
</comment>
<comment type="catalytic activity">
    <reaction evidence="3">
        <text>17beta-estradiol + NADP(+) = estrone + NADPH + H(+)</text>
        <dbReference type="Rhea" id="RHEA:24616"/>
        <dbReference type="ChEBI" id="CHEBI:15378"/>
        <dbReference type="ChEBI" id="CHEBI:16469"/>
        <dbReference type="ChEBI" id="CHEBI:17263"/>
        <dbReference type="ChEBI" id="CHEBI:57783"/>
        <dbReference type="ChEBI" id="CHEBI:58349"/>
        <dbReference type="EC" id="1.1.1.62"/>
    </reaction>
</comment>
<comment type="catalytic activity">
    <reaction evidence="2">
        <text>3alpha-hydroxy-5alpha-pregnan-20-one + NAD(+) = 5alpha-pregnane-3,20-dione + NADH + H(+)</text>
        <dbReference type="Rhea" id="RHEA:41980"/>
        <dbReference type="ChEBI" id="CHEBI:15378"/>
        <dbReference type="ChEBI" id="CHEBI:28952"/>
        <dbReference type="ChEBI" id="CHEBI:50169"/>
        <dbReference type="ChEBI" id="CHEBI:57540"/>
        <dbReference type="ChEBI" id="CHEBI:57945"/>
    </reaction>
    <physiologicalReaction direction="left-to-right" evidence="2">
        <dbReference type="Rhea" id="RHEA:41981"/>
    </physiologicalReaction>
</comment>
<comment type="catalytic activity">
    <reaction evidence="2">
        <text>5alpha-androstane-3beta,17beta-diol + NAD(+) = 17beta-hydroxy-5alpha-androstan-3-one + NADH + H(+)</text>
        <dbReference type="Rhea" id="RHEA:42184"/>
        <dbReference type="ChEBI" id="CHEBI:15378"/>
        <dbReference type="ChEBI" id="CHEBI:16330"/>
        <dbReference type="ChEBI" id="CHEBI:18329"/>
        <dbReference type="ChEBI" id="CHEBI:57540"/>
        <dbReference type="ChEBI" id="CHEBI:57945"/>
    </reaction>
    <physiologicalReaction direction="right-to-left" evidence="2">
        <dbReference type="Rhea" id="RHEA:42186"/>
    </physiologicalReaction>
</comment>
<comment type="catalytic activity">
    <reaction evidence="2">
        <text>3beta-hydroxy-5alpha-androstan-17-one + NAD(+) = 5alpha-androstan-3,17-dione + NADH + H(+)</text>
        <dbReference type="Rhea" id="RHEA:42188"/>
        <dbReference type="ChEBI" id="CHEBI:15378"/>
        <dbReference type="ChEBI" id="CHEBI:15994"/>
        <dbReference type="ChEBI" id="CHEBI:57540"/>
        <dbReference type="ChEBI" id="CHEBI:57945"/>
        <dbReference type="ChEBI" id="CHEBI:541975"/>
    </reaction>
    <physiologicalReaction direction="right-to-left" evidence="2">
        <dbReference type="Rhea" id="RHEA:42190"/>
    </physiologicalReaction>
</comment>
<comment type="subcellular location">
    <subcellularLocation>
        <location evidence="2">Microsome membrane</location>
        <topology evidence="2">Peripheral membrane protein</topology>
        <orientation evidence="2">Lumenal side</orientation>
    </subcellularLocation>
    <subcellularLocation>
        <location evidence="2">Endoplasmic reticulum membrane</location>
        <topology evidence="2">Peripheral membrane protein</topology>
        <orientation evidence="2">Lumenal side</orientation>
    </subcellularLocation>
</comment>
<comment type="similarity">
    <text evidence="6">Belongs to the short-chain dehydrogenases/reductases (SDR) family.</text>
</comment>
<organism>
    <name type="scientific">Bos taurus</name>
    <name type="common">Bovine</name>
    <dbReference type="NCBI Taxonomy" id="9913"/>
    <lineage>
        <taxon>Eukaryota</taxon>
        <taxon>Metazoa</taxon>
        <taxon>Chordata</taxon>
        <taxon>Craniata</taxon>
        <taxon>Vertebrata</taxon>
        <taxon>Euteleostomi</taxon>
        <taxon>Mammalia</taxon>
        <taxon>Eutheria</taxon>
        <taxon>Laurasiatheria</taxon>
        <taxon>Artiodactyla</taxon>
        <taxon>Ruminantia</taxon>
        <taxon>Pecora</taxon>
        <taxon>Bovidae</taxon>
        <taxon>Bovinae</taxon>
        <taxon>Bos</taxon>
    </lineage>
</organism>
<accession>Q3T001</accession>
<feature type="signal peptide" evidence="4">
    <location>
        <begin position="1"/>
        <end position="17"/>
    </location>
</feature>
<feature type="chain" id="PRO_0000303210" description="17-beta-hydroxysteroid dehydrogenase type 6">
    <location>
        <begin position="18"/>
        <end position="317"/>
    </location>
</feature>
<feature type="active site" description="Proton acceptor" evidence="5">
    <location>
        <position position="176"/>
    </location>
</feature>
<feature type="binding site" evidence="1">
    <location>
        <begin position="33"/>
        <end position="57"/>
    </location>
    <ligand>
        <name>NAD(+)</name>
        <dbReference type="ChEBI" id="CHEBI:57540"/>
    </ligand>
</feature>
<feature type="binding site" evidence="4">
    <location>
        <position position="164"/>
    </location>
    <ligand>
        <name>substrate</name>
    </ligand>
</feature>
<feature type="glycosylation site" description="N-linked (GlcNAc...) asparagine" evidence="4">
    <location>
        <position position="71"/>
    </location>
</feature>
<feature type="glycosylation site" description="N-linked (GlcNAc...) asparagine" evidence="4">
    <location>
        <position position="161"/>
    </location>
</feature>